<proteinExistence type="inferred from homology"/>
<dbReference type="EC" id="2.3.1.46" evidence="1"/>
<dbReference type="EMBL" id="CP000038">
    <property type="protein sequence ID" value="AAZ90686.1"/>
    <property type="molecule type" value="Genomic_DNA"/>
</dbReference>
<dbReference type="SMR" id="Q3YUX6"/>
<dbReference type="KEGG" id="ssn:SSON_4185"/>
<dbReference type="HOGENOM" id="CLU_057851_0_1_6"/>
<dbReference type="UniPathway" id="UPA00051">
    <property type="reaction ID" value="UER00075"/>
</dbReference>
<dbReference type="Proteomes" id="UP000002529">
    <property type="component" value="Chromosome"/>
</dbReference>
<dbReference type="GO" id="GO:0005737">
    <property type="term" value="C:cytoplasm"/>
    <property type="evidence" value="ECO:0007669"/>
    <property type="project" value="UniProtKB-SubCell"/>
</dbReference>
<dbReference type="GO" id="GO:0004414">
    <property type="term" value="F:homoserine O-acetyltransferase activity"/>
    <property type="evidence" value="ECO:0007669"/>
    <property type="project" value="UniProtKB-UniRule"/>
</dbReference>
<dbReference type="GO" id="GO:0008899">
    <property type="term" value="F:homoserine O-succinyltransferase activity"/>
    <property type="evidence" value="ECO:0007669"/>
    <property type="project" value="UniProtKB-EC"/>
</dbReference>
<dbReference type="GO" id="GO:0019281">
    <property type="term" value="P:L-methionine biosynthetic process from homoserine via O-succinyl-L-homoserine and cystathionine"/>
    <property type="evidence" value="ECO:0007669"/>
    <property type="project" value="InterPro"/>
</dbReference>
<dbReference type="CDD" id="cd03131">
    <property type="entry name" value="GATase1_HTS"/>
    <property type="match status" value="1"/>
</dbReference>
<dbReference type="FunFam" id="3.40.50.880:FF:000004">
    <property type="entry name" value="Homoserine O-succinyltransferase"/>
    <property type="match status" value="1"/>
</dbReference>
<dbReference type="Gene3D" id="3.40.50.880">
    <property type="match status" value="1"/>
</dbReference>
<dbReference type="HAMAP" id="MF_00295">
    <property type="entry name" value="MetA_acyltransf"/>
    <property type="match status" value="1"/>
</dbReference>
<dbReference type="InterPro" id="IPR029062">
    <property type="entry name" value="Class_I_gatase-like"/>
</dbReference>
<dbReference type="InterPro" id="IPR005697">
    <property type="entry name" value="HST_MetA"/>
</dbReference>
<dbReference type="InterPro" id="IPR033752">
    <property type="entry name" value="MetA_family"/>
</dbReference>
<dbReference type="NCBIfam" id="TIGR01001">
    <property type="entry name" value="metA"/>
    <property type="match status" value="1"/>
</dbReference>
<dbReference type="PANTHER" id="PTHR20919">
    <property type="entry name" value="HOMOSERINE O-SUCCINYLTRANSFERASE"/>
    <property type="match status" value="1"/>
</dbReference>
<dbReference type="PANTHER" id="PTHR20919:SF0">
    <property type="entry name" value="HOMOSERINE O-SUCCINYLTRANSFERASE"/>
    <property type="match status" value="1"/>
</dbReference>
<dbReference type="Pfam" id="PF04204">
    <property type="entry name" value="HTS"/>
    <property type="match status" value="1"/>
</dbReference>
<dbReference type="PIRSF" id="PIRSF000450">
    <property type="entry name" value="H_ser_succinyltr"/>
    <property type="match status" value="1"/>
</dbReference>
<dbReference type="SUPFAM" id="SSF52317">
    <property type="entry name" value="Class I glutamine amidotransferase-like"/>
    <property type="match status" value="1"/>
</dbReference>
<comment type="function">
    <text evidence="1">Transfers a succinyl group from succinyl-CoA to L-homoserine, forming succinyl-L-homoserine.</text>
</comment>
<comment type="catalytic activity">
    <reaction evidence="1">
        <text>L-homoserine + succinyl-CoA = O-succinyl-L-homoserine + CoA</text>
        <dbReference type="Rhea" id="RHEA:22008"/>
        <dbReference type="ChEBI" id="CHEBI:57287"/>
        <dbReference type="ChEBI" id="CHEBI:57292"/>
        <dbReference type="ChEBI" id="CHEBI:57476"/>
        <dbReference type="ChEBI" id="CHEBI:57661"/>
        <dbReference type="EC" id="2.3.1.46"/>
    </reaction>
</comment>
<comment type="pathway">
    <text evidence="1">Amino-acid biosynthesis; L-methionine biosynthesis via de novo pathway; O-succinyl-L-homoserine from L-homoserine: step 1/1.</text>
</comment>
<comment type="subunit">
    <text evidence="1">Homodimer.</text>
</comment>
<comment type="subcellular location">
    <subcellularLocation>
        <location evidence="1">Cytoplasm</location>
    </subcellularLocation>
</comment>
<comment type="similarity">
    <text evidence="1">Belongs to the MetA family.</text>
</comment>
<sequence length="309" mass="35770">MPIRVPDELPAVNFLREENVFVMTTSRASGQEIRPLKVLILNLMPKKIETENQFLRLLSNSPLQVDIQLLRIDSRESRNTPAEHLNNFYCNFEDIQEQNFDGLIVTGAPLGLVEFNDVAYWPQIKQVLEWSKDHVTSTLFVCWAVQAALNILYGIPKQTRTDKLSGVYEHHILHPHALLTRGFDDSFLAPHSRYADFPAALIRDYTDLEILAETEEGDAYLFASKDKRIAFVTGHPEYDAQTLAQEYFRDVEAGLDPDVPYNYFPHNDPQNKPRASWRSHGNLLFTNWLNYYVYQITPYDLRHMNPTLD</sequence>
<accession>Q3YUX6</accession>
<reference key="1">
    <citation type="journal article" date="2005" name="Nucleic Acids Res.">
        <title>Genome dynamics and diversity of Shigella species, the etiologic agents of bacillary dysentery.</title>
        <authorList>
            <person name="Yang F."/>
            <person name="Yang J."/>
            <person name="Zhang X."/>
            <person name="Chen L."/>
            <person name="Jiang Y."/>
            <person name="Yan Y."/>
            <person name="Tang X."/>
            <person name="Wang J."/>
            <person name="Xiong Z."/>
            <person name="Dong J."/>
            <person name="Xue Y."/>
            <person name="Zhu Y."/>
            <person name="Xu X."/>
            <person name="Sun L."/>
            <person name="Chen S."/>
            <person name="Nie H."/>
            <person name="Peng J."/>
            <person name="Xu J."/>
            <person name="Wang Y."/>
            <person name="Yuan Z."/>
            <person name="Wen Y."/>
            <person name="Yao Z."/>
            <person name="Shen Y."/>
            <person name="Qiang B."/>
            <person name="Hou Y."/>
            <person name="Yu J."/>
            <person name="Jin Q."/>
        </authorList>
    </citation>
    <scope>NUCLEOTIDE SEQUENCE [LARGE SCALE GENOMIC DNA]</scope>
    <source>
        <strain>Ss046</strain>
    </source>
</reference>
<evidence type="ECO:0000255" key="1">
    <source>
        <dbReference type="HAMAP-Rule" id="MF_00295"/>
    </source>
</evidence>
<keyword id="KW-0012">Acyltransferase</keyword>
<keyword id="KW-0028">Amino-acid biosynthesis</keyword>
<keyword id="KW-0963">Cytoplasm</keyword>
<keyword id="KW-0486">Methionine biosynthesis</keyword>
<keyword id="KW-1185">Reference proteome</keyword>
<keyword id="KW-0808">Transferase</keyword>
<name>METAS_SHISS</name>
<organism>
    <name type="scientific">Shigella sonnei (strain Ss046)</name>
    <dbReference type="NCBI Taxonomy" id="300269"/>
    <lineage>
        <taxon>Bacteria</taxon>
        <taxon>Pseudomonadati</taxon>
        <taxon>Pseudomonadota</taxon>
        <taxon>Gammaproteobacteria</taxon>
        <taxon>Enterobacterales</taxon>
        <taxon>Enterobacteriaceae</taxon>
        <taxon>Shigella</taxon>
    </lineage>
</organism>
<feature type="chain" id="PRO_1000021846" description="Homoserine O-succinyltransferase">
    <location>
        <begin position="1"/>
        <end position="309"/>
    </location>
</feature>
<feature type="active site" description="Acyl-thioester intermediate" evidence="1">
    <location>
        <position position="142"/>
    </location>
</feature>
<feature type="active site" description="Proton acceptor" evidence="1">
    <location>
        <position position="235"/>
    </location>
</feature>
<feature type="active site" evidence="1">
    <location>
        <position position="237"/>
    </location>
</feature>
<feature type="binding site" evidence="1">
    <location>
        <position position="163"/>
    </location>
    <ligand>
        <name>substrate</name>
    </ligand>
</feature>
<feature type="binding site" evidence="1">
    <location>
        <position position="192"/>
    </location>
    <ligand>
        <name>substrate</name>
    </ligand>
</feature>
<feature type="binding site" evidence="1">
    <location>
        <position position="249"/>
    </location>
    <ligand>
        <name>substrate</name>
    </ligand>
</feature>
<feature type="site" description="Important for acyl-CoA specificity" evidence="1">
    <location>
        <position position="111"/>
    </location>
</feature>
<feature type="site" description="Important for substrate specificity" evidence="1">
    <location>
        <position position="192"/>
    </location>
</feature>
<gene>
    <name evidence="1" type="primary">metAS</name>
    <name type="ordered locus">SSON_4185</name>
</gene>
<protein>
    <recommendedName>
        <fullName evidence="1">Homoserine O-succinyltransferase</fullName>
        <shortName evidence="1">HST</shortName>
        <ecNumber evidence="1">2.3.1.46</ecNumber>
    </recommendedName>
    <alternativeName>
        <fullName evidence="1">Homoserine transsuccinylase</fullName>
        <shortName evidence="1">HTS</shortName>
    </alternativeName>
</protein>